<sequence length="167" mass="18461">MDLKQIEKLMIAMGRNGMKRFAIKREGLELELERDTREGNRQEPVFYDSRLFSGFSQERPIPTDPKKDTIKETTTENSETSTTTSSGDFISSPLVGTFYGSPAPDSPSFVKPGDIVSEDTIVCIVEAMKVMNEVKAGMSGRVLEVLITNGDPVQFGSKLFRIAKDAS</sequence>
<proteinExistence type="inferred from homology"/>
<reference key="1">
    <citation type="journal article" date="1999" name="Nat. Genet.">
        <title>Comparative genomes of Chlamydia pneumoniae and C. trachomatis.</title>
        <authorList>
            <person name="Kalman S."/>
            <person name="Mitchell W.P."/>
            <person name="Marathe R."/>
            <person name="Lammel C.J."/>
            <person name="Fan J."/>
            <person name="Hyman R.W."/>
            <person name="Olinger L."/>
            <person name="Grimwood J."/>
            <person name="Davis R.W."/>
            <person name="Stephens R.S."/>
        </authorList>
    </citation>
    <scope>NUCLEOTIDE SEQUENCE [LARGE SCALE GENOMIC DNA]</scope>
    <source>
        <strain>CWL029</strain>
    </source>
</reference>
<reference key="2">
    <citation type="journal article" date="2000" name="Nucleic Acids Res.">
        <title>Genome sequences of Chlamydia trachomatis MoPn and Chlamydia pneumoniae AR39.</title>
        <authorList>
            <person name="Read T.D."/>
            <person name="Brunham R.C."/>
            <person name="Shen C."/>
            <person name="Gill S.R."/>
            <person name="Heidelberg J.F."/>
            <person name="White O."/>
            <person name="Hickey E.K."/>
            <person name="Peterson J.D."/>
            <person name="Utterback T.R."/>
            <person name="Berry K.J."/>
            <person name="Bass S."/>
            <person name="Linher K.D."/>
            <person name="Weidman J.F."/>
            <person name="Khouri H.M."/>
            <person name="Craven B."/>
            <person name="Bowman C."/>
            <person name="Dodson R.J."/>
            <person name="Gwinn M.L."/>
            <person name="Nelson W.C."/>
            <person name="DeBoy R.T."/>
            <person name="Kolonay J.F."/>
            <person name="McClarty G."/>
            <person name="Salzberg S.L."/>
            <person name="Eisen J.A."/>
            <person name="Fraser C.M."/>
        </authorList>
    </citation>
    <scope>NUCLEOTIDE SEQUENCE [LARGE SCALE GENOMIC DNA]</scope>
    <source>
        <strain>AR39</strain>
    </source>
</reference>
<reference key="3">
    <citation type="journal article" date="2000" name="Nucleic Acids Res.">
        <title>Comparison of whole genome sequences of Chlamydia pneumoniae J138 from Japan and CWL029 from USA.</title>
        <authorList>
            <person name="Shirai M."/>
            <person name="Hirakawa H."/>
            <person name="Kimoto M."/>
            <person name="Tabuchi M."/>
            <person name="Kishi F."/>
            <person name="Ouchi K."/>
            <person name="Shiba T."/>
            <person name="Ishii K."/>
            <person name="Hattori M."/>
            <person name="Kuhara S."/>
            <person name="Nakazawa T."/>
        </authorList>
    </citation>
    <scope>NUCLEOTIDE SEQUENCE [LARGE SCALE GENOMIC DNA]</scope>
    <source>
        <strain>J138</strain>
    </source>
</reference>
<reference key="4">
    <citation type="submission" date="2002-05" db="EMBL/GenBank/DDBJ databases">
        <title>The genome sequence of Chlamydia pneumoniae TW183 and comparison with other Chlamydia strains based on whole genome sequence analysis.</title>
        <authorList>
            <person name="Geng M.M."/>
            <person name="Schuhmacher A."/>
            <person name="Muehldorfer I."/>
            <person name="Bensch K.W."/>
            <person name="Schaefer K.P."/>
            <person name="Schneider S."/>
            <person name="Pohl T."/>
            <person name="Essig A."/>
            <person name="Marre R."/>
            <person name="Melchers K."/>
        </authorList>
    </citation>
    <scope>NUCLEOTIDE SEQUENCE [LARGE SCALE GENOMIC DNA]</scope>
    <source>
        <strain>TW-183</strain>
    </source>
</reference>
<dbReference type="EMBL" id="AE001363">
    <property type="protein sequence ID" value="AAD18336.1"/>
    <property type="molecule type" value="Genomic_DNA"/>
</dbReference>
<dbReference type="EMBL" id="AE002161">
    <property type="protein sequence ID" value="AAF38403.1"/>
    <property type="molecule type" value="Genomic_DNA"/>
</dbReference>
<dbReference type="EMBL" id="BA000008">
    <property type="protein sequence ID" value="BAA98393.1"/>
    <property type="molecule type" value="Genomic_DNA"/>
</dbReference>
<dbReference type="EMBL" id="AE009440">
    <property type="protein sequence ID" value="AAP98119.1"/>
    <property type="molecule type" value="Genomic_DNA"/>
</dbReference>
<dbReference type="PIR" id="F72110">
    <property type="entry name" value="F72110"/>
</dbReference>
<dbReference type="PIR" id="G86513">
    <property type="entry name" value="G86513"/>
</dbReference>
<dbReference type="RefSeq" id="NP_224392.1">
    <property type="nucleotide sequence ID" value="NC_000922.1"/>
</dbReference>
<dbReference type="RefSeq" id="WP_010882834.1">
    <property type="nucleotide sequence ID" value="NZ_LN847257.1"/>
</dbReference>
<dbReference type="SMR" id="Q9Z901"/>
<dbReference type="STRING" id="406984.CPK_ORF00689"/>
<dbReference type="GeneID" id="45050229"/>
<dbReference type="KEGG" id="cpa:CP_0585"/>
<dbReference type="KEGG" id="cpj:accB"/>
<dbReference type="KEGG" id="cpn:CPn_0183"/>
<dbReference type="KEGG" id="cpt:CpB0186"/>
<dbReference type="PATRIC" id="fig|115713.3.peg.208"/>
<dbReference type="eggNOG" id="COG0511">
    <property type="taxonomic scope" value="Bacteria"/>
</dbReference>
<dbReference type="HOGENOM" id="CLU_016733_3_0_0"/>
<dbReference type="OrthoDB" id="9807469at2"/>
<dbReference type="UniPathway" id="UPA00094"/>
<dbReference type="Proteomes" id="UP000000583">
    <property type="component" value="Chromosome"/>
</dbReference>
<dbReference type="Proteomes" id="UP000000801">
    <property type="component" value="Chromosome"/>
</dbReference>
<dbReference type="GO" id="GO:0009317">
    <property type="term" value="C:acetyl-CoA carboxylase complex"/>
    <property type="evidence" value="ECO:0007669"/>
    <property type="project" value="InterPro"/>
</dbReference>
<dbReference type="GO" id="GO:0003989">
    <property type="term" value="F:acetyl-CoA carboxylase activity"/>
    <property type="evidence" value="ECO:0007669"/>
    <property type="project" value="InterPro"/>
</dbReference>
<dbReference type="GO" id="GO:0006633">
    <property type="term" value="P:fatty acid biosynthetic process"/>
    <property type="evidence" value="ECO:0007669"/>
    <property type="project" value="UniProtKB-UniPathway"/>
</dbReference>
<dbReference type="CDD" id="cd06850">
    <property type="entry name" value="biotinyl_domain"/>
    <property type="match status" value="1"/>
</dbReference>
<dbReference type="Gene3D" id="2.40.50.100">
    <property type="match status" value="1"/>
</dbReference>
<dbReference type="InterPro" id="IPR001249">
    <property type="entry name" value="AcCoA_biotinCC"/>
</dbReference>
<dbReference type="InterPro" id="IPR001882">
    <property type="entry name" value="Biotin_BS"/>
</dbReference>
<dbReference type="InterPro" id="IPR050709">
    <property type="entry name" value="Biotin_Carboxyl_Carrier/Decarb"/>
</dbReference>
<dbReference type="InterPro" id="IPR000089">
    <property type="entry name" value="Biotin_lipoyl"/>
</dbReference>
<dbReference type="InterPro" id="IPR011053">
    <property type="entry name" value="Single_hybrid_motif"/>
</dbReference>
<dbReference type="NCBIfam" id="TIGR00531">
    <property type="entry name" value="BCCP"/>
    <property type="match status" value="1"/>
</dbReference>
<dbReference type="PANTHER" id="PTHR45266">
    <property type="entry name" value="OXALOACETATE DECARBOXYLASE ALPHA CHAIN"/>
    <property type="match status" value="1"/>
</dbReference>
<dbReference type="PANTHER" id="PTHR45266:SF3">
    <property type="entry name" value="OXALOACETATE DECARBOXYLASE ALPHA CHAIN"/>
    <property type="match status" value="1"/>
</dbReference>
<dbReference type="Pfam" id="PF00364">
    <property type="entry name" value="Biotin_lipoyl"/>
    <property type="match status" value="1"/>
</dbReference>
<dbReference type="PRINTS" id="PR01071">
    <property type="entry name" value="ACOABIOTINCC"/>
</dbReference>
<dbReference type="SUPFAM" id="SSF51230">
    <property type="entry name" value="Single hybrid motif"/>
    <property type="match status" value="1"/>
</dbReference>
<dbReference type="PROSITE" id="PS00188">
    <property type="entry name" value="BIOTIN"/>
    <property type="match status" value="1"/>
</dbReference>
<dbReference type="PROSITE" id="PS50968">
    <property type="entry name" value="BIOTINYL_LIPOYL"/>
    <property type="match status" value="1"/>
</dbReference>
<name>BCCP_CHLPN</name>
<evidence type="ECO:0000250" key="1"/>
<evidence type="ECO:0000255" key="2">
    <source>
        <dbReference type="PROSITE-ProRule" id="PRU01066"/>
    </source>
</evidence>
<evidence type="ECO:0000256" key="3">
    <source>
        <dbReference type="SAM" id="MobiDB-lite"/>
    </source>
</evidence>
<protein>
    <recommendedName>
        <fullName>Biotin carboxyl carrier protein of acetyl-CoA carboxylase</fullName>
        <shortName>BCCP</shortName>
    </recommendedName>
</protein>
<keyword id="KW-0092">Biotin</keyword>
<keyword id="KW-0275">Fatty acid biosynthesis</keyword>
<keyword id="KW-0276">Fatty acid metabolism</keyword>
<keyword id="KW-0444">Lipid biosynthesis</keyword>
<keyword id="KW-0443">Lipid metabolism</keyword>
<feature type="chain" id="PRO_0000146803" description="Biotin carboxyl carrier protein of acetyl-CoA carboxylase">
    <location>
        <begin position="1"/>
        <end position="167"/>
    </location>
</feature>
<feature type="domain" description="Biotinyl-binding" evidence="2">
    <location>
        <begin position="87"/>
        <end position="163"/>
    </location>
</feature>
<feature type="region of interest" description="Disordered" evidence="3">
    <location>
        <begin position="53"/>
        <end position="91"/>
    </location>
</feature>
<feature type="compositionally biased region" description="Basic and acidic residues" evidence="3">
    <location>
        <begin position="64"/>
        <end position="74"/>
    </location>
</feature>
<feature type="compositionally biased region" description="Low complexity" evidence="3">
    <location>
        <begin position="75"/>
        <end position="86"/>
    </location>
</feature>
<feature type="modified residue" description="N6-biotinyllysine" evidence="1 2">
    <location>
        <position position="129"/>
    </location>
</feature>
<organism>
    <name type="scientific">Chlamydia pneumoniae</name>
    <name type="common">Chlamydophila pneumoniae</name>
    <dbReference type="NCBI Taxonomy" id="83558"/>
    <lineage>
        <taxon>Bacteria</taxon>
        <taxon>Pseudomonadati</taxon>
        <taxon>Chlamydiota</taxon>
        <taxon>Chlamydiia</taxon>
        <taxon>Chlamydiales</taxon>
        <taxon>Chlamydiaceae</taxon>
        <taxon>Chlamydia/Chlamydophila group</taxon>
        <taxon>Chlamydia</taxon>
    </lineage>
</organism>
<accession>Q9Z901</accession>
<comment type="function">
    <text evidence="1">This protein is a component of the acetyl coenzyme A carboxylase complex; first, biotin carboxylase catalyzes the carboxylation of the carrier protein and then the transcarboxylase transfers the carboxyl group to form malonyl-CoA.</text>
</comment>
<comment type="pathway">
    <text>Lipid metabolism; fatty acid biosynthesis.</text>
</comment>
<comment type="subunit">
    <text evidence="1">Homodimer.</text>
</comment>
<gene>
    <name type="primary">accB</name>
    <name type="ordered locus">CPn_0183</name>
    <name type="ordered locus">CP_0585</name>
    <name type="ordered locus">CpB0186</name>
</gene>